<gene>
    <name type="ordered locus">amb3269</name>
</gene>
<proteinExistence type="inferred from homology"/>
<dbReference type="EMBL" id="AP007255">
    <property type="protein sequence ID" value="BAE52073.1"/>
    <property type="molecule type" value="Genomic_DNA"/>
</dbReference>
<dbReference type="RefSeq" id="WP_011385631.1">
    <property type="nucleotide sequence ID" value="NC_007626.1"/>
</dbReference>
<dbReference type="SMR" id="Q2W252"/>
<dbReference type="KEGG" id="mag:amb3269"/>
<dbReference type="HOGENOM" id="CLU_117653_1_0_5"/>
<dbReference type="OrthoDB" id="123240at2"/>
<dbReference type="Proteomes" id="UP000007058">
    <property type="component" value="Chromosome"/>
</dbReference>
<dbReference type="GO" id="GO:0005886">
    <property type="term" value="C:plasma membrane"/>
    <property type="evidence" value="ECO:0007669"/>
    <property type="project" value="UniProtKB-SubCell"/>
</dbReference>
<dbReference type="HAMAP" id="MF_00010">
    <property type="entry name" value="UPF0060"/>
    <property type="match status" value="1"/>
</dbReference>
<dbReference type="InterPro" id="IPR003844">
    <property type="entry name" value="UPF0060"/>
</dbReference>
<dbReference type="NCBIfam" id="NF002586">
    <property type="entry name" value="PRK02237.1"/>
    <property type="match status" value="1"/>
</dbReference>
<dbReference type="PANTHER" id="PTHR36116">
    <property type="entry name" value="UPF0060 MEMBRANE PROTEIN YNFA"/>
    <property type="match status" value="1"/>
</dbReference>
<dbReference type="PANTHER" id="PTHR36116:SF1">
    <property type="entry name" value="UPF0060 MEMBRANE PROTEIN YNFA"/>
    <property type="match status" value="1"/>
</dbReference>
<dbReference type="Pfam" id="PF02694">
    <property type="entry name" value="UPF0060"/>
    <property type="match status" value="1"/>
</dbReference>
<dbReference type="SUPFAM" id="SSF103481">
    <property type="entry name" value="Multidrug resistance efflux transporter EmrE"/>
    <property type="match status" value="1"/>
</dbReference>
<sequence>MWTIPTYILAAFAEIGGCFAFWAWLRLDKSPLWLVPGMASLGLFAWALTRIDADFAGRAYAAYGGIYILASLIWMWAVEGTRPDRWDTIGAAICVVGAMVIIFGPRST</sequence>
<reference key="1">
    <citation type="journal article" date="2005" name="DNA Res.">
        <title>Complete genome sequence of the facultative anaerobic magnetotactic bacterium Magnetospirillum sp. strain AMB-1.</title>
        <authorList>
            <person name="Matsunaga T."/>
            <person name="Okamura Y."/>
            <person name="Fukuda Y."/>
            <person name="Wahyudi A.T."/>
            <person name="Murase Y."/>
            <person name="Takeyama H."/>
        </authorList>
    </citation>
    <scope>NUCLEOTIDE SEQUENCE [LARGE SCALE GENOMIC DNA]</scope>
    <source>
        <strain>ATCC 700264 / AMB-1</strain>
    </source>
</reference>
<protein>
    <recommendedName>
        <fullName evidence="1">UPF0060 membrane protein amb3269</fullName>
    </recommendedName>
</protein>
<feature type="chain" id="PRO_0000282230" description="UPF0060 membrane protein amb3269">
    <location>
        <begin position="1"/>
        <end position="108"/>
    </location>
</feature>
<feature type="transmembrane region" description="Helical" evidence="1">
    <location>
        <begin position="4"/>
        <end position="24"/>
    </location>
</feature>
<feature type="transmembrane region" description="Helical" evidence="1">
    <location>
        <begin position="31"/>
        <end position="51"/>
    </location>
</feature>
<feature type="transmembrane region" description="Helical" evidence="1">
    <location>
        <begin position="59"/>
        <end position="79"/>
    </location>
</feature>
<feature type="transmembrane region" description="Helical" evidence="1">
    <location>
        <begin position="85"/>
        <end position="105"/>
    </location>
</feature>
<comment type="subcellular location">
    <subcellularLocation>
        <location evidence="1">Cell inner membrane</location>
        <topology evidence="1">Multi-pass membrane protein</topology>
    </subcellularLocation>
</comment>
<comment type="similarity">
    <text evidence="1">Belongs to the UPF0060 family.</text>
</comment>
<evidence type="ECO:0000255" key="1">
    <source>
        <dbReference type="HAMAP-Rule" id="MF_00010"/>
    </source>
</evidence>
<name>Y3269_PARM1</name>
<keyword id="KW-0997">Cell inner membrane</keyword>
<keyword id="KW-1003">Cell membrane</keyword>
<keyword id="KW-0472">Membrane</keyword>
<keyword id="KW-0812">Transmembrane</keyword>
<keyword id="KW-1133">Transmembrane helix</keyword>
<organism>
    <name type="scientific">Paramagnetospirillum magneticum (strain ATCC 700264 / AMB-1)</name>
    <name type="common">Magnetospirillum magneticum</name>
    <dbReference type="NCBI Taxonomy" id="342108"/>
    <lineage>
        <taxon>Bacteria</taxon>
        <taxon>Pseudomonadati</taxon>
        <taxon>Pseudomonadota</taxon>
        <taxon>Alphaproteobacteria</taxon>
        <taxon>Rhodospirillales</taxon>
        <taxon>Magnetospirillaceae</taxon>
        <taxon>Paramagnetospirillum</taxon>
    </lineage>
</organism>
<accession>Q2W252</accession>